<sequence>MIDPDGFRPNVGIILTNDAGQVLWARRINQDAWQFPQGGINPQETPEDALYRELNEEVGLERHDVQILACTRGWLRYRLPQRLVRTHSQPLCIGQKQKWFLLRLISNEQRVRMDLTGKPEFDGWRWVSYWYPLGQVVTFKREVYRRALKELAPRLLSRD</sequence>
<evidence type="ECO:0000255" key="1">
    <source>
        <dbReference type="HAMAP-Rule" id="MF_00298"/>
    </source>
</evidence>
<accession>Q48CC6</accession>
<name>RPPH_PSE14</name>
<proteinExistence type="inferred from homology"/>
<reference key="1">
    <citation type="journal article" date="2005" name="J. Bacteriol.">
        <title>Whole-genome sequence analysis of Pseudomonas syringae pv. phaseolicola 1448A reveals divergence among pathovars in genes involved in virulence and transposition.</title>
        <authorList>
            <person name="Joardar V."/>
            <person name="Lindeberg M."/>
            <person name="Jackson R.W."/>
            <person name="Selengut J."/>
            <person name="Dodson R."/>
            <person name="Brinkac L.M."/>
            <person name="Daugherty S.C."/>
            <person name="DeBoy R.T."/>
            <person name="Durkin A.S."/>
            <person name="Gwinn Giglio M."/>
            <person name="Madupu R."/>
            <person name="Nelson W.C."/>
            <person name="Rosovitz M.J."/>
            <person name="Sullivan S.A."/>
            <person name="Crabtree J."/>
            <person name="Creasy T."/>
            <person name="Davidsen T.M."/>
            <person name="Haft D.H."/>
            <person name="Zafar N."/>
            <person name="Zhou L."/>
            <person name="Halpin R."/>
            <person name="Holley T."/>
            <person name="Khouri H.M."/>
            <person name="Feldblyum T.V."/>
            <person name="White O."/>
            <person name="Fraser C.M."/>
            <person name="Chatterjee A.K."/>
            <person name="Cartinhour S."/>
            <person name="Schneider D."/>
            <person name="Mansfield J.W."/>
            <person name="Collmer A."/>
            <person name="Buell R."/>
        </authorList>
    </citation>
    <scope>NUCLEOTIDE SEQUENCE [LARGE SCALE GENOMIC DNA]</scope>
    <source>
        <strain>1448A / Race 6</strain>
    </source>
</reference>
<protein>
    <recommendedName>
        <fullName evidence="1">RNA pyrophosphohydrolase</fullName>
        <ecNumber evidence="1">3.6.1.-</ecNumber>
    </recommendedName>
    <alternativeName>
        <fullName evidence="1">(Di)nucleoside polyphosphate hydrolase</fullName>
    </alternativeName>
</protein>
<gene>
    <name evidence="1" type="primary">rppH</name>
    <name evidence="1" type="synonym">nudH</name>
    <name type="ordered locus">PSPPH_4875</name>
</gene>
<dbReference type="EC" id="3.6.1.-" evidence="1"/>
<dbReference type="EMBL" id="CP000058">
    <property type="protein sequence ID" value="AAZ34730.1"/>
    <property type="molecule type" value="Genomic_DNA"/>
</dbReference>
<dbReference type="RefSeq" id="WP_002555745.1">
    <property type="nucleotide sequence ID" value="NC_005773.3"/>
</dbReference>
<dbReference type="SMR" id="Q48CC6"/>
<dbReference type="KEGG" id="psp:PSPPH_4875"/>
<dbReference type="eggNOG" id="COG0494">
    <property type="taxonomic scope" value="Bacteria"/>
</dbReference>
<dbReference type="HOGENOM" id="CLU_087195_3_1_6"/>
<dbReference type="Proteomes" id="UP000000551">
    <property type="component" value="Chromosome"/>
</dbReference>
<dbReference type="GO" id="GO:0005737">
    <property type="term" value="C:cytoplasm"/>
    <property type="evidence" value="ECO:0007669"/>
    <property type="project" value="TreeGrafter"/>
</dbReference>
<dbReference type="GO" id="GO:0034353">
    <property type="term" value="F:mRNA 5'-diphosphatase activity"/>
    <property type="evidence" value="ECO:0007669"/>
    <property type="project" value="TreeGrafter"/>
</dbReference>
<dbReference type="GO" id="GO:0006402">
    <property type="term" value="P:mRNA catabolic process"/>
    <property type="evidence" value="ECO:0007669"/>
    <property type="project" value="TreeGrafter"/>
</dbReference>
<dbReference type="CDD" id="cd03671">
    <property type="entry name" value="NUDIX_Ap4A_hydrolase_plant_like"/>
    <property type="match status" value="1"/>
</dbReference>
<dbReference type="FunFam" id="3.90.79.10:FF:000001">
    <property type="entry name" value="RNA pyrophosphohydrolase"/>
    <property type="match status" value="1"/>
</dbReference>
<dbReference type="Gene3D" id="3.90.79.10">
    <property type="entry name" value="Nucleoside Triphosphate Pyrophosphohydrolase"/>
    <property type="match status" value="1"/>
</dbReference>
<dbReference type="HAMAP" id="MF_00298">
    <property type="entry name" value="Nudix_RppH"/>
    <property type="match status" value="1"/>
</dbReference>
<dbReference type="InterPro" id="IPR020476">
    <property type="entry name" value="Nudix_hydrolase"/>
</dbReference>
<dbReference type="InterPro" id="IPR015797">
    <property type="entry name" value="NUDIX_hydrolase-like_dom_sf"/>
</dbReference>
<dbReference type="InterPro" id="IPR020084">
    <property type="entry name" value="NUDIX_hydrolase_CS"/>
</dbReference>
<dbReference type="InterPro" id="IPR000086">
    <property type="entry name" value="NUDIX_hydrolase_dom"/>
</dbReference>
<dbReference type="InterPro" id="IPR022927">
    <property type="entry name" value="RppH"/>
</dbReference>
<dbReference type="NCBIfam" id="NF001934">
    <property type="entry name" value="PRK00714.1-1"/>
    <property type="match status" value="1"/>
</dbReference>
<dbReference type="NCBIfam" id="NF001937">
    <property type="entry name" value="PRK00714.1-4"/>
    <property type="match status" value="1"/>
</dbReference>
<dbReference type="NCBIfam" id="NF001938">
    <property type="entry name" value="PRK00714.1-5"/>
    <property type="match status" value="1"/>
</dbReference>
<dbReference type="PANTHER" id="PTHR23114">
    <property type="entry name" value="M7GPPPN-MRNA HYDROLASE"/>
    <property type="match status" value="1"/>
</dbReference>
<dbReference type="PANTHER" id="PTHR23114:SF17">
    <property type="entry name" value="M7GPPPN-MRNA HYDROLASE"/>
    <property type="match status" value="1"/>
</dbReference>
<dbReference type="Pfam" id="PF00293">
    <property type="entry name" value="NUDIX"/>
    <property type="match status" value="1"/>
</dbReference>
<dbReference type="PRINTS" id="PR00502">
    <property type="entry name" value="NUDIXFAMILY"/>
</dbReference>
<dbReference type="SUPFAM" id="SSF55811">
    <property type="entry name" value="Nudix"/>
    <property type="match status" value="1"/>
</dbReference>
<dbReference type="PROSITE" id="PS51462">
    <property type="entry name" value="NUDIX"/>
    <property type="match status" value="1"/>
</dbReference>
<dbReference type="PROSITE" id="PS00893">
    <property type="entry name" value="NUDIX_BOX"/>
    <property type="match status" value="1"/>
</dbReference>
<keyword id="KW-0378">Hydrolase</keyword>
<organism>
    <name type="scientific">Pseudomonas savastanoi pv. phaseolicola (strain 1448A / Race 6)</name>
    <name type="common">Pseudomonas syringae pv. phaseolicola (strain 1448A / Race 6)</name>
    <dbReference type="NCBI Taxonomy" id="264730"/>
    <lineage>
        <taxon>Bacteria</taxon>
        <taxon>Pseudomonadati</taxon>
        <taxon>Pseudomonadota</taxon>
        <taxon>Gammaproteobacteria</taxon>
        <taxon>Pseudomonadales</taxon>
        <taxon>Pseudomonadaceae</taxon>
        <taxon>Pseudomonas</taxon>
    </lineage>
</organism>
<feature type="chain" id="PRO_0000231926" description="RNA pyrophosphohydrolase">
    <location>
        <begin position="1"/>
        <end position="159"/>
    </location>
</feature>
<feature type="domain" description="Nudix hydrolase" evidence="1">
    <location>
        <begin position="6"/>
        <end position="149"/>
    </location>
</feature>
<feature type="short sequence motif" description="Nudix box">
    <location>
        <begin position="38"/>
        <end position="59"/>
    </location>
</feature>
<comment type="function">
    <text evidence="1">Accelerates the degradation of transcripts by removing pyrophosphate from the 5'-end of triphosphorylated RNA, leading to a more labile monophosphorylated state that can stimulate subsequent ribonuclease cleavage.</text>
</comment>
<comment type="cofactor">
    <cofactor evidence="1">
        <name>a divalent metal cation</name>
        <dbReference type="ChEBI" id="CHEBI:60240"/>
    </cofactor>
</comment>
<comment type="similarity">
    <text evidence="1">Belongs to the Nudix hydrolase family. RppH subfamily.</text>
</comment>